<proteinExistence type="evidence at transcript level"/>
<evidence type="ECO:0000250" key="1">
    <source>
        <dbReference type="UniProtKB" id="Q99J09"/>
    </source>
</evidence>
<evidence type="ECO:0000250" key="2">
    <source>
        <dbReference type="UniProtKB" id="Q9BQA1"/>
    </source>
</evidence>
<evidence type="ECO:0000305" key="3"/>
<name>MEP50_PONAB</name>
<keyword id="KW-0963">Cytoplasm</keyword>
<keyword id="KW-0539">Nucleus</keyword>
<keyword id="KW-0597">Phosphoprotein</keyword>
<keyword id="KW-1185">Reference proteome</keyword>
<keyword id="KW-0677">Repeat</keyword>
<keyword id="KW-0853">WD repeat</keyword>
<sequence>MRKETPPPLVPPAAREWNLPPNAPACMERQLEAARYRSDGALLLGASSLSGRCWAGSLWLFKDPCAAPNEGFCSAGVQTEAGVADLTWVGERGILVASDSGAVELWELDENETLIVSKFCKYEHDDIVSTVSVLSSGTQAVSGSKDICIKVWDLAQQVVLNSYRAHAAQVTCVAASPHKDSVFLSCSEDNRILLWDTRRPKPASQIGCSAPGYLPTSLAWHPQQSEVFVFGDENGTVSLVDTKSTSCVLSSAVHSQCVTGLVFSPHSVPFLASLSEDCSLAVLDSSLSELFRSQAHRDFVRDATWSPLNHSLLTTVGWDHQVVHHIVPTEPLPAPGPASVTE</sequence>
<organism>
    <name type="scientific">Pongo abelii</name>
    <name type="common">Sumatran orangutan</name>
    <name type="synonym">Pongo pygmaeus abelii</name>
    <dbReference type="NCBI Taxonomy" id="9601"/>
    <lineage>
        <taxon>Eukaryota</taxon>
        <taxon>Metazoa</taxon>
        <taxon>Chordata</taxon>
        <taxon>Craniata</taxon>
        <taxon>Vertebrata</taxon>
        <taxon>Euteleostomi</taxon>
        <taxon>Mammalia</taxon>
        <taxon>Eutheria</taxon>
        <taxon>Euarchontoglires</taxon>
        <taxon>Primates</taxon>
        <taxon>Haplorrhini</taxon>
        <taxon>Catarrhini</taxon>
        <taxon>Hominidae</taxon>
        <taxon>Pongo</taxon>
    </lineage>
</organism>
<protein>
    <recommendedName>
        <fullName evidence="3">Methylosome protein WDR77</fullName>
    </recommendedName>
    <alternativeName>
        <fullName evidence="2">Methylosome protein 50</fullName>
        <shortName evidence="2">MEP-50</shortName>
    </alternativeName>
    <alternativeName>
        <fullName evidence="2">WD repeat-containing protein 77</fullName>
    </alternativeName>
</protein>
<accession>Q5RBZ2</accession>
<reference key="1">
    <citation type="submission" date="2004-11" db="EMBL/GenBank/DDBJ databases">
        <authorList>
            <consortium name="The German cDNA consortium"/>
        </authorList>
    </citation>
    <scope>NUCLEOTIDE SEQUENCE [LARGE SCALE MRNA]</scope>
    <source>
        <tissue>Brain cortex</tissue>
    </source>
</reference>
<comment type="function">
    <text evidence="1 2">Non-catalytic component of the methylosome complex, composed of PRMT5, WDR77 and CLNS1A, which modifies specific arginines to dimethylarginines in several spliceosomal Sm proteins and histones. This modification targets Sm proteins to the survival of motor neurons (SMN) complex for assembly into small nuclear ribonucleoprotein core particles. Might play a role in transcription regulation. The methylosome complex also methylates the Piwi proteins (PIWIL1, PIWIL2 and PIWIL4), methylation of Piwi proteins being required for the interaction with Tudor domain-containing proteins and subsequent localization to the meiotic nuage.</text>
</comment>
<comment type="subunit">
    <text evidence="1 2">Component of the methylosome complex composed of PRMT5, WDR77 and CLNS1A (By similarity). Found in a complex composed of PRMT5, WDR77 and RIOK1 (By similarity). RIOK1 and CLNS1A bound directly to PRMT5 at the same binding site, in a mutually exclusive manner, which allows the recruitment of distinct methylation substrates, such as nucleolin/NCL and Sm proteins, respectively (By similarity). Found in a complex with the component of the methylosome, PRMT5, CLNS1A, WDR77, PRMT1 and ERH. Directly interacts with PRMT5, as well as with several Sm proteins, including SNRPB and SNRPD2 and, more weakly, SNRPD3 and SNRPE. Forms a compact hetero-octamer with PRMT5, decorating the outer surface of a PRMT5 tetramer. Interacts with SUZ12 and histone H2A/H2AC20, but not with histones H2B, H3 nor H4. Interacts with CTDP1 and LSM11. Interacts with APEX1, AR and NKX3-1. Interacts with CHTOP. Interacts with FAM47E. Interacts with TSC22D2 (By similarity).</text>
</comment>
<comment type="subcellular location">
    <subcellularLocation>
        <location evidence="2">Nucleus</location>
    </subcellularLocation>
    <subcellularLocation>
        <location evidence="2">Cytoplasm</location>
    </subcellularLocation>
</comment>
<gene>
    <name evidence="2" type="primary">WDR77</name>
    <name evidence="2" type="synonym">MEP50</name>
</gene>
<dbReference type="EMBL" id="CR858490">
    <property type="protein sequence ID" value="CAH90718.1"/>
    <property type="molecule type" value="mRNA"/>
</dbReference>
<dbReference type="RefSeq" id="NP_001125399.1">
    <property type="nucleotide sequence ID" value="NM_001131927.1"/>
</dbReference>
<dbReference type="SMR" id="Q5RBZ2"/>
<dbReference type="STRING" id="9601.ENSPPYP00000001202"/>
<dbReference type="GeneID" id="100172304"/>
<dbReference type="KEGG" id="pon:100172304"/>
<dbReference type="CTD" id="79084"/>
<dbReference type="eggNOG" id="KOG0284">
    <property type="taxonomic scope" value="Eukaryota"/>
</dbReference>
<dbReference type="InParanoid" id="Q5RBZ2"/>
<dbReference type="OrthoDB" id="10260946at2759"/>
<dbReference type="Proteomes" id="UP000001595">
    <property type="component" value="Unplaced"/>
</dbReference>
<dbReference type="GO" id="GO:0005737">
    <property type="term" value="C:cytoplasm"/>
    <property type="evidence" value="ECO:0000250"/>
    <property type="project" value="UniProtKB"/>
</dbReference>
<dbReference type="GO" id="GO:0005829">
    <property type="term" value="C:cytosol"/>
    <property type="evidence" value="ECO:0000250"/>
    <property type="project" value="UniProtKB"/>
</dbReference>
<dbReference type="GO" id="GO:0034709">
    <property type="term" value="C:methylosome"/>
    <property type="evidence" value="ECO:0000250"/>
    <property type="project" value="UniProtKB"/>
</dbReference>
<dbReference type="GO" id="GO:0005634">
    <property type="term" value="C:nucleus"/>
    <property type="evidence" value="ECO:0000250"/>
    <property type="project" value="UniProtKB"/>
</dbReference>
<dbReference type="GO" id="GO:0008327">
    <property type="term" value="F:methyl-CpG binding"/>
    <property type="evidence" value="ECO:0000250"/>
    <property type="project" value="UniProtKB"/>
</dbReference>
<dbReference type="GO" id="GO:0007309">
    <property type="term" value="P:oocyte axis specification"/>
    <property type="evidence" value="ECO:0007669"/>
    <property type="project" value="TreeGrafter"/>
</dbReference>
<dbReference type="FunFam" id="2.130.10.10:FF:000322">
    <property type="entry name" value="Methylosome protein 50"/>
    <property type="match status" value="1"/>
</dbReference>
<dbReference type="Gene3D" id="2.130.10.10">
    <property type="entry name" value="YVTN repeat-like/Quinoprotein amine dehydrogenase"/>
    <property type="match status" value="1"/>
</dbReference>
<dbReference type="InterPro" id="IPR052139">
    <property type="entry name" value="Methylosome_Comp_WDR77"/>
</dbReference>
<dbReference type="InterPro" id="IPR015943">
    <property type="entry name" value="WD40/YVTN_repeat-like_dom_sf"/>
</dbReference>
<dbReference type="InterPro" id="IPR019775">
    <property type="entry name" value="WD40_repeat_CS"/>
</dbReference>
<dbReference type="InterPro" id="IPR036322">
    <property type="entry name" value="WD40_repeat_dom_sf"/>
</dbReference>
<dbReference type="InterPro" id="IPR001680">
    <property type="entry name" value="WD40_rpt"/>
</dbReference>
<dbReference type="PANTHER" id="PTHR46853">
    <property type="entry name" value="METHYLOSOME PROTEIN 50"/>
    <property type="match status" value="1"/>
</dbReference>
<dbReference type="PANTHER" id="PTHR46853:SF3">
    <property type="entry name" value="METHYLOSOME PROTEIN WDR77"/>
    <property type="match status" value="1"/>
</dbReference>
<dbReference type="Pfam" id="PF00400">
    <property type="entry name" value="WD40"/>
    <property type="match status" value="2"/>
</dbReference>
<dbReference type="SMART" id="SM00320">
    <property type="entry name" value="WD40"/>
    <property type="match status" value="6"/>
</dbReference>
<dbReference type="SUPFAM" id="SSF50978">
    <property type="entry name" value="WD40 repeat-like"/>
    <property type="match status" value="1"/>
</dbReference>
<dbReference type="PROSITE" id="PS00678">
    <property type="entry name" value="WD_REPEATS_1"/>
    <property type="match status" value="1"/>
</dbReference>
<dbReference type="PROSITE" id="PS50082">
    <property type="entry name" value="WD_REPEATS_2"/>
    <property type="match status" value="2"/>
</dbReference>
<dbReference type="PROSITE" id="PS50294">
    <property type="entry name" value="WD_REPEATS_REGION"/>
    <property type="match status" value="1"/>
</dbReference>
<feature type="chain" id="PRO_0000331608" description="Methylosome protein WDR77">
    <location>
        <begin position="1"/>
        <end position="342"/>
    </location>
</feature>
<feature type="repeat" description="WD 1">
    <location>
        <begin position="22"/>
        <end position="75"/>
    </location>
</feature>
<feature type="repeat" description="WD 2">
    <location>
        <begin position="78"/>
        <end position="116"/>
    </location>
</feature>
<feature type="repeat" description="WD 3">
    <location>
        <begin position="123"/>
        <end position="162"/>
    </location>
</feature>
<feature type="repeat" description="WD 4">
    <location>
        <begin position="165"/>
        <end position="205"/>
    </location>
</feature>
<feature type="repeat" description="WD 5">
    <location>
        <begin position="209"/>
        <end position="250"/>
    </location>
</feature>
<feature type="repeat" description="WD 6">
    <location>
        <begin position="253"/>
        <end position="293"/>
    </location>
</feature>
<feature type="repeat" description="WD 7">
    <location>
        <begin position="295"/>
        <end position="330"/>
    </location>
</feature>
<feature type="modified residue" description="Phosphothreonine" evidence="2">
    <location>
        <position position="5"/>
    </location>
</feature>